<dbReference type="EC" id="2.4.1.227" evidence="1"/>
<dbReference type="EMBL" id="AE014295">
    <property type="protein sequence ID" value="AAN25123.1"/>
    <property type="molecule type" value="Genomic_DNA"/>
</dbReference>
<dbReference type="RefSeq" id="NP_696487.1">
    <property type="nucleotide sequence ID" value="NC_004307.2"/>
</dbReference>
<dbReference type="RefSeq" id="WP_007052550.1">
    <property type="nucleotide sequence ID" value="NC_004307.2"/>
</dbReference>
<dbReference type="SMR" id="Q8CY50"/>
<dbReference type="STRING" id="206672.BL1323"/>
<dbReference type="CAZy" id="GT28">
    <property type="family name" value="Glycosyltransferase Family 28"/>
</dbReference>
<dbReference type="EnsemblBacteria" id="AAN25123">
    <property type="protein sequence ID" value="AAN25123"/>
    <property type="gene ID" value="BL1323"/>
</dbReference>
<dbReference type="KEGG" id="blo:BL1323"/>
<dbReference type="PATRIC" id="fig|206672.9.peg.174"/>
<dbReference type="HOGENOM" id="CLU_037404_1_0_11"/>
<dbReference type="OrthoDB" id="9808936at2"/>
<dbReference type="PhylomeDB" id="Q8CY50"/>
<dbReference type="UniPathway" id="UPA00219"/>
<dbReference type="Proteomes" id="UP000000439">
    <property type="component" value="Chromosome"/>
</dbReference>
<dbReference type="GO" id="GO:0005886">
    <property type="term" value="C:plasma membrane"/>
    <property type="evidence" value="ECO:0007669"/>
    <property type="project" value="UniProtKB-SubCell"/>
</dbReference>
<dbReference type="GO" id="GO:0051991">
    <property type="term" value="F:UDP-N-acetyl-D-glucosamine:N-acetylmuramoyl-L-alanyl-D-glutamyl-meso-2,6-diaminopimelyl-D-alanyl-D-alanine-diphosphoundecaprenol 4-beta-N-acetylglucosaminlytransferase activity"/>
    <property type="evidence" value="ECO:0007669"/>
    <property type="project" value="RHEA"/>
</dbReference>
<dbReference type="GO" id="GO:0050511">
    <property type="term" value="F:undecaprenyldiphospho-muramoylpentapeptide beta-N-acetylglucosaminyltransferase activity"/>
    <property type="evidence" value="ECO:0007669"/>
    <property type="project" value="UniProtKB-UniRule"/>
</dbReference>
<dbReference type="GO" id="GO:0005975">
    <property type="term" value="P:carbohydrate metabolic process"/>
    <property type="evidence" value="ECO:0007669"/>
    <property type="project" value="InterPro"/>
</dbReference>
<dbReference type="GO" id="GO:0051301">
    <property type="term" value="P:cell division"/>
    <property type="evidence" value="ECO:0007669"/>
    <property type="project" value="UniProtKB-KW"/>
</dbReference>
<dbReference type="GO" id="GO:0071555">
    <property type="term" value="P:cell wall organization"/>
    <property type="evidence" value="ECO:0007669"/>
    <property type="project" value="UniProtKB-KW"/>
</dbReference>
<dbReference type="GO" id="GO:0030259">
    <property type="term" value="P:lipid glycosylation"/>
    <property type="evidence" value="ECO:0007669"/>
    <property type="project" value="UniProtKB-UniRule"/>
</dbReference>
<dbReference type="GO" id="GO:0009252">
    <property type="term" value="P:peptidoglycan biosynthetic process"/>
    <property type="evidence" value="ECO:0007669"/>
    <property type="project" value="UniProtKB-UniRule"/>
</dbReference>
<dbReference type="GO" id="GO:0008360">
    <property type="term" value="P:regulation of cell shape"/>
    <property type="evidence" value="ECO:0007669"/>
    <property type="project" value="UniProtKB-KW"/>
</dbReference>
<dbReference type="CDD" id="cd03785">
    <property type="entry name" value="GT28_MurG"/>
    <property type="match status" value="1"/>
</dbReference>
<dbReference type="Gene3D" id="3.40.50.2000">
    <property type="entry name" value="Glycogen Phosphorylase B"/>
    <property type="match status" value="2"/>
</dbReference>
<dbReference type="HAMAP" id="MF_00033">
    <property type="entry name" value="MurG"/>
    <property type="match status" value="1"/>
</dbReference>
<dbReference type="InterPro" id="IPR006009">
    <property type="entry name" value="GlcNAc_MurG"/>
</dbReference>
<dbReference type="InterPro" id="IPR007235">
    <property type="entry name" value="Glyco_trans_28_C"/>
</dbReference>
<dbReference type="InterPro" id="IPR004276">
    <property type="entry name" value="GlycoTrans_28_N"/>
</dbReference>
<dbReference type="PANTHER" id="PTHR21015:SF22">
    <property type="entry name" value="GLYCOSYLTRANSFERASE"/>
    <property type="match status" value="1"/>
</dbReference>
<dbReference type="PANTHER" id="PTHR21015">
    <property type="entry name" value="UDP-N-ACETYLGLUCOSAMINE--N-ACETYLMURAMYL-(PENTAPEPTIDE) PYROPHOSPHORYL-UNDECAPRENOL N-ACETYLGLUCOSAMINE TRANSFERASE 1"/>
    <property type="match status" value="1"/>
</dbReference>
<dbReference type="Pfam" id="PF04101">
    <property type="entry name" value="Glyco_tran_28_C"/>
    <property type="match status" value="1"/>
</dbReference>
<dbReference type="Pfam" id="PF03033">
    <property type="entry name" value="Glyco_transf_28"/>
    <property type="match status" value="1"/>
</dbReference>
<dbReference type="SUPFAM" id="SSF53756">
    <property type="entry name" value="UDP-Glycosyltransferase/glycogen phosphorylase"/>
    <property type="match status" value="1"/>
</dbReference>
<organism>
    <name type="scientific">Bifidobacterium longum (strain NCC 2705)</name>
    <dbReference type="NCBI Taxonomy" id="206672"/>
    <lineage>
        <taxon>Bacteria</taxon>
        <taxon>Bacillati</taxon>
        <taxon>Actinomycetota</taxon>
        <taxon>Actinomycetes</taxon>
        <taxon>Bifidobacteriales</taxon>
        <taxon>Bifidobacteriaceae</taxon>
        <taxon>Bifidobacterium</taxon>
    </lineage>
</organism>
<feature type="chain" id="PRO_0000109145" description="UDP-N-acetylglucosamine--N-acetylmuramyl-(pentapeptide) pyrophosphoryl-undecaprenol N-acetylglucosamine transferase">
    <location>
        <begin position="1"/>
        <end position="393"/>
    </location>
</feature>
<feature type="binding site" evidence="1">
    <location>
        <begin position="15"/>
        <end position="17"/>
    </location>
    <ligand>
        <name>UDP-N-acetyl-alpha-D-glucosamine</name>
        <dbReference type="ChEBI" id="CHEBI:57705"/>
    </ligand>
</feature>
<feature type="binding site" evidence="1">
    <location>
        <position position="129"/>
    </location>
    <ligand>
        <name>UDP-N-acetyl-alpha-D-glucosamine</name>
        <dbReference type="ChEBI" id="CHEBI:57705"/>
    </ligand>
</feature>
<feature type="binding site" evidence="1">
    <location>
        <position position="171"/>
    </location>
    <ligand>
        <name>UDP-N-acetyl-alpha-D-glucosamine</name>
        <dbReference type="ChEBI" id="CHEBI:57705"/>
    </ligand>
</feature>
<feature type="binding site" evidence="1">
    <location>
        <position position="211"/>
    </location>
    <ligand>
        <name>UDP-N-acetyl-alpha-D-glucosamine</name>
        <dbReference type="ChEBI" id="CHEBI:57705"/>
    </ligand>
</feature>
<feature type="binding site" evidence="1">
    <location>
        <position position="322"/>
    </location>
    <ligand>
        <name>UDP-N-acetyl-alpha-D-glucosamine</name>
        <dbReference type="ChEBI" id="CHEBI:57705"/>
    </ligand>
</feature>
<sequence>MNQGTPHIVLAGGGTAGHVNPLLAVAGAIRDIEPTAQVTVIGTAVGLEKDLVPEAGYELDTIEKVPFPRRPNLYMLRFPAKWKRETAKVRSILETRHADVVAGFGGYASAPVYATAHKMGIPIAIHEQNARAGMANKLGARWADFIGTVYEGTGLKPRAGADVERVGLPLRPAIASLTKRIGDDRAAVRRESAAQLGVDPNRPLVLVTGGSLGAQSLNRAIASSAADLLAHAQIIHLTGRGKISEVRELVTASAGADVLTGIGPESAGQGDYHTAEYLERIDLAFACADLVICRAGAGSVSELAALGLPAIYVPLPIGNGEQRFNAEPVVNAGGGLLVADKDLTPQWVHEHVPDLLADHERLAEFGRKAWEYGIRNAAEIMARHVLQLAEPSK</sequence>
<gene>
    <name evidence="1" type="primary">murG</name>
    <name type="ordered locus">BL1323</name>
</gene>
<keyword id="KW-0131">Cell cycle</keyword>
<keyword id="KW-0132">Cell division</keyword>
<keyword id="KW-1003">Cell membrane</keyword>
<keyword id="KW-0133">Cell shape</keyword>
<keyword id="KW-0961">Cell wall biogenesis/degradation</keyword>
<keyword id="KW-0328">Glycosyltransferase</keyword>
<keyword id="KW-0472">Membrane</keyword>
<keyword id="KW-0573">Peptidoglycan synthesis</keyword>
<keyword id="KW-1185">Reference proteome</keyword>
<keyword id="KW-0808">Transferase</keyword>
<accession>Q8CY50</accession>
<protein>
    <recommendedName>
        <fullName evidence="1">UDP-N-acetylglucosamine--N-acetylmuramyl-(pentapeptide) pyrophosphoryl-undecaprenol N-acetylglucosamine transferase</fullName>
        <ecNumber evidence="1">2.4.1.227</ecNumber>
    </recommendedName>
    <alternativeName>
        <fullName evidence="1">Undecaprenyl-PP-MurNAc-pentapeptide-UDPGlcNAc GlcNAc transferase</fullName>
    </alternativeName>
</protein>
<proteinExistence type="inferred from homology"/>
<name>MURG_BIFLO</name>
<comment type="function">
    <text evidence="1">Cell wall formation. Catalyzes the transfer of a GlcNAc subunit on undecaprenyl-pyrophosphoryl-MurNAc-pentapeptide (lipid intermediate I) to form undecaprenyl-pyrophosphoryl-MurNAc-(pentapeptide)GlcNAc (lipid intermediate II).</text>
</comment>
<comment type="catalytic activity">
    <reaction evidence="1">
        <text>di-trans,octa-cis-undecaprenyl diphospho-N-acetyl-alpha-D-muramoyl-L-alanyl-D-glutamyl-meso-2,6-diaminopimeloyl-D-alanyl-D-alanine + UDP-N-acetyl-alpha-D-glucosamine = di-trans,octa-cis-undecaprenyl diphospho-[N-acetyl-alpha-D-glucosaminyl-(1-&gt;4)]-N-acetyl-alpha-D-muramoyl-L-alanyl-D-glutamyl-meso-2,6-diaminopimeloyl-D-alanyl-D-alanine + UDP + H(+)</text>
        <dbReference type="Rhea" id="RHEA:31227"/>
        <dbReference type="ChEBI" id="CHEBI:15378"/>
        <dbReference type="ChEBI" id="CHEBI:57705"/>
        <dbReference type="ChEBI" id="CHEBI:58223"/>
        <dbReference type="ChEBI" id="CHEBI:61387"/>
        <dbReference type="ChEBI" id="CHEBI:61388"/>
        <dbReference type="EC" id="2.4.1.227"/>
    </reaction>
</comment>
<comment type="pathway">
    <text evidence="1">Cell wall biogenesis; peptidoglycan biosynthesis.</text>
</comment>
<comment type="subcellular location">
    <subcellularLocation>
        <location evidence="1">Cell membrane</location>
        <topology evidence="1">Peripheral membrane protein</topology>
        <orientation evidence="1">Cytoplasmic side</orientation>
    </subcellularLocation>
</comment>
<comment type="similarity">
    <text evidence="1">Belongs to the glycosyltransferase 28 family. MurG subfamily.</text>
</comment>
<evidence type="ECO:0000255" key="1">
    <source>
        <dbReference type="HAMAP-Rule" id="MF_00033"/>
    </source>
</evidence>
<reference key="1">
    <citation type="journal article" date="2002" name="Proc. Natl. Acad. Sci. U.S.A.">
        <title>The genome sequence of Bifidobacterium longum reflects its adaptation to the human gastrointestinal tract.</title>
        <authorList>
            <person name="Schell M.A."/>
            <person name="Karmirantzou M."/>
            <person name="Snel B."/>
            <person name="Vilanova D."/>
            <person name="Berger B."/>
            <person name="Pessi G."/>
            <person name="Zwahlen M.-C."/>
            <person name="Desiere F."/>
            <person name="Bork P."/>
            <person name="Delley M."/>
            <person name="Pridmore R.D."/>
            <person name="Arigoni F."/>
        </authorList>
    </citation>
    <scope>NUCLEOTIDE SEQUENCE [LARGE SCALE GENOMIC DNA]</scope>
    <source>
        <strain>NCC 2705</strain>
    </source>
</reference>